<feature type="chain" id="PRO_0000454624" description="Carboxylic ester hydrolase FVEG_12634">
    <location>
        <begin position="1"/>
        <end position="546"/>
    </location>
</feature>
<feature type="region of interest" description="Disordered" evidence="2">
    <location>
        <begin position="72"/>
        <end position="91"/>
    </location>
</feature>
<feature type="active site" description="Acyl-ester intermediate" evidence="1">
    <location>
        <position position="214"/>
    </location>
</feature>
<name>FDB34_GIBM7</name>
<proteinExistence type="evidence at transcript level"/>
<keyword id="KW-0378">Hydrolase</keyword>
<keyword id="KW-1185">Reference proteome</keyword>
<sequence length="546" mass="62089">MFDNYSRESYIFNAGSLGHIKGLTITSHGSPAVHYFGGLPYALPPVGQWRFRVPRRLPKDYRYGTATEPGKFTDGTKICPQPPSSNTPDPSVVSEDCLQLNIWVPAGPPPIHGWPVCFYIHGGFLQVGTSNTKPEDLVSLLNESAFRAIMVLPSYRLNVFGFLASKALAAEASSNGEATGNYGLWDQRLALEWTHENIRLFGGDRSNITVAGYSAGAYSTFQQLAHELFRVPEEKAIIRRVAMFSNSTGVMPKSLQDQQLQCDELLRRLGINLDLSYDEKLASLRAVPHDRLVQAQIGMRISEFRVLADDAFYPLDLMDKINNGEFAKRMKIRGIRLMNGECESEHIMYCRWRTPQESYSAVYQRLLADFSPEVTQKIMEHYCGSSENLPVGYKNWEEFFGRVYANIQVHYLQRGFHNALFTGGLEAGRDVFRYRFERRLDCVAEKIPSEWGVTHLTDIPVWLWGCGYTNGLDDQEKKWLKGWNEGFAVFVNGDEVNWGTKNPKDMRRWRRDGKTDVCEDNSWEDGLKFWKLVNSGHRGTEGKAND</sequence>
<reference key="1">
    <citation type="journal article" date="2010" name="Nature">
        <title>Comparative genomics reveals mobile pathogenicity chromosomes in Fusarium.</title>
        <authorList>
            <person name="Ma L.-J."/>
            <person name="van der Does H.C."/>
            <person name="Borkovich K.A."/>
            <person name="Coleman J.J."/>
            <person name="Daboussi M.-J."/>
            <person name="Di Pietro A."/>
            <person name="Dufresne M."/>
            <person name="Freitag M."/>
            <person name="Grabherr M."/>
            <person name="Henrissat B."/>
            <person name="Houterman P.M."/>
            <person name="Kang S."/>
            <person name="Shim W.-B."/>
            <person name="Woloshuk C."/>
            <person name="Xie X."/>
            <person name="Xu J.-R."/>
            <person name="Antoniw J."/>
            <person name="Baker S.E."/>
            <person name="Bluhm B.H."/>
            <person name="Breakspear A."/>
            <person name="Brown D.W."/>
            <person name="Butchko R.A.E."/>
            <person name="Chapman S."/>
            <person name="Coulson R."/>
            <person name="Coutinho P.M."/>
            <person name="Danchin E.G.J."/>
            <person name="Diener A."/>
            <person name="Gale L.R."/>
            <person name="Gardiner D.M."/>
            <person name="Goff S."/>
            <person name="Hammond-Kosack K.E."/>
            <person name="Hilburn K."/>
            <person name="Hua-Van A."/>
            <person name="Jonkers W."/>
            <person name="Kazan K."/>
            <person name="Kodira C.D."/>
            <person name="Koehrsen M."/>
            <person name="Kumar L."/>
            <person name="Lee Y.-H."/>
            <person name="Li L."/>
            <person name="Manners J.M."/>
            <person name="Miranda-Saavedra D."/>
            <person name="Mukherjee M."/>
            <person name="Park G."/>
            <person name="Park J."/>
            <person name="Park S.-Y."/>
            <person name="Proctor R.H."/>
            <person name="Regev A."/>
            <person name="Ruiz-Roldan M.C."/>
            <person name="Sain D."/>
            <person name="Sakthikumar S."/>
            <person name="Sykes S."/>
            <person name="Schwartz D.C."/>
            <person name="Turgeon B.G."/>
            <person name="Wapinski I."/>
            <person name="Yoder O."/>
            <person name="Young S."/>
            <person name="Zeng Q."/>
            <person name="Zhou S."/>
            <person name="Galagan J."/>
            <person name="Cuomo C.A."/>
            <person name="Kistler H.C."/>
            <person name="Rep M."/>
        </authorList>
    </citation>
    <scope>NUCLEOTIDE SEQUENCE [LARGE SCALE GENOMIC DNA]</scope>
    <source>
        <strain>M3125 / FGSC 7600</strain>
    </source>
</reference>
<reference key="2">
    <citation type="journal article" date="2002" name="Mol. Plant Microbe Interact.">
        <title>Fdb1 and Fdb2, Fusarium verticillioides loci necessary for detoxification of preformed antimicrobials from corn.</title>
        <authorList>
            <person name="Glenn A.E."/>
            <person name="Gold S.E."/>
            <person name="Bacon C.W."/>
        </authorList>
    </citation>
    <scope>FUNCTION</scope>
</reference>
<reference key="3">
    <citation type="journal article" date="2003" name="Appl. Environ. Microbiol.">
        <title>Identification of intermediate and branch metabolites resulting from biotransformation of 2-benzoxazolinone by Fusarium verticillioides.</title>
        <authorList>
            <person name="Glenn A.E."/>
            <person name="Meredith F.I."/>
            <person name="Morrison W.H. III"/>
            <person name="Bacon C.W."/>
        </authorList>
    </citation>
    <scope>FUNCTION</scope>
</reference>
<reference key="4">
    <citation type="journal article" date="2009" name="J. Appl. Microbiol.">
        <title>FDB2 encodes a member of the arylamine N-acetyltransferase family and is necessary for biotransformation of benzoxazolinones by Fusarium verticillioides.</title>
        <authorList>
            <person name="Glenn A.E."/>
            <person name="Bacon C.W."/>
        </authorList>
    </citation>
    <scope>FUNCTION</scope>
    <scope>DISRUPTION PHENOTYPE</scope>
</reference>
<reference key="5">
    <citation type="journal article" date="2016" name="PLoS ONE">
        <title>Two horizontally transferred xenobiotic resistance gene clusters associated with detoxification of benzoxazolinones by Fusarium species.</title>
        <authorList>
            <person name="Glenn A.E."/>
            <person name="Davis C.B."/>
            <person name="Gao M."/>
            <person name="Gold S.E."/>
            <person name="Mitchell T.R."/>
            <person name="Proctor R.H."/>
            <person name="Stewart J.E."/>
            <person name="Snook M.E."/>
        </authorList>
    </citation>
    <scope>FUNCTION</scope>
    <scope>INDUCTION</scope>
</reference>
<dbReference type="EC" id="3.1.1.1" evidence="1"/>
<dbReference type="EMBL" id="CM000580">
    <property type="protein sequence ID" value="EWG54413.1"/>
    <property type="molecule type" value="Genomic_DNA"/>
</dbReference>
<dbReference type="RefSeq" id="XP_018760604.1">
    <property type="nucleotide sequence ID" value="XM_018901982.1"/>
</dbReference>
<dbReference type="SMR" id="W7MSI0"/>
<dbReference type="STRING" id="334819.W7MSI0"/>
<dbReference type="ESTHER" id="gibm7-w7msi0">
    <property type="family name" value="Fungal_carboxylesterase_lipase"/>
</dbReference>
<dbReference type="GeneID" id="30070062"/>
<dbReference type="KEGG" id="fvr:FVEG_12634"/>
<dbReference type="VEuPathDB" id="FungiDB:FVEG_12634"/>
<dbReference type="eggNOG" id="KOG1516">
    <property type="taxonomic scope" value="Eukaryota"/>
</dbReference>
<dbReference type="OrthoDB" id="23115at110618"/>
<dbReference type="Proteomes" id="UP000009096">
    <property type="component" value="Chromosome 3"/>
</dbReference>
<dbReference type="GO" id="GO:0106435">
    <property type="term" value="F:carboxylesterase activity"/>
    <property type="evidence" value="ECO:0007669"/>
    <property type="project" value="RHEA"/>
</dbReference>
<dbReference type="Gene3D" id="3.40.50.1820">
    <property type="entry name" value="alpha/beta hydrolase"/>
    <property type="match status" value="1"/>
</dbReference>
<dbReference type="InterPro" id="IPR029058">
    <property type="entry name" value="AB_hydrolase_fold"/>
</dbReference>
<dbReference type="InterPro" id="IPR002018">
    <property type="entry name" value="CarbesteraseB"/>
</dbReference>
<dbReference type="InterPro" id="IPR019826">
    <property type="entry name" value="Carboxylesterase_B_AS"/>
</dbReference>
<dbReference type="PANTHER" id="PTHR43142">
    <property type="entry name" value="CARBOXYLIC ESTER HYDROLASE"/>
    <property type="match status" value="1"/>
</dbReference>
<dbReference type="PANTHER" id="PTHR43142:SF4">
    <property type="entry name" value="CARBOXYLIC ESTER HYDROLASE"/>
    <property type="match status" value="1"/>
</dbReference>
<dbReference type="Pfam" id="PF00135">
    <property type="entry name" value="COesterase"/>
    <property type="match status" value="1"/>
</dbReference>
<dbReference type="SUPFAM" id="SSF53474">
    <property type="entry name" value="alpha/beta-Hydrolases"/>
    <property type="match status" value="1"/>
</dbReference>
<dbReference type="PROSITE" id="PS00122">
    <property type="entry name" value="CARBOXYLESTERASE_B_1"/>
    <property type="match status" value="1"/>
</dbReference>
<protein>
    <recommendedName>
        <fullName evidence="7">Carboxylic ester hydrolase FVEG_12634</fullName>
        <ecNumber evidence="1">3.1.1.1</ecNumber>
    </recommendedName>
    <alternativeName>
        <fullName evidence="7">Fusarium detoxification of benzoxazolinone cluster 2 protein FVEG_12634</fullName>
        <shortName evidence="7">FDB2 cluster protein FVEG_12634</shortName>
    </alternativeName>
</protein>
<accession>W7MSI0</accession>
<organism>
    <name type="scientific">Gibberella moniliformis (strain M3125 / FGSC 7600)</name>
    <name type="common">Maize ear and stalk rot fungus</name>
    <name type="synonym">Fusarium verticillioides</name>
    <dbReference type="NCBI Taxonomy" id="334819"/>
    <lineage>
        <taxon>Eukaryota</taxon>
        <taxon>Fungi</taxon>
        <taxon>Dikarya</taxon>
        <taxon>Ascomycota</taxon>
        <taxon>Pezizomycotina</taxon>
        <taxon>Sordariomycetes</taxon>
        <taxon>Hypocreomycetidae</taxon>
        <taxon>Hypocreales</taxon>
        <taxon>Nectriaceae</taxon>
        <taxon>Fusarium</taxon>
        <taxon>Fusarium fujikuroi species complex</taxon>
    </lineage>
</organism>
<evidence type="ECO:0000255" key="1">
    <source>
        <dbReference type="PROSITE-ProRule" id="PRU10039"/>
    </source>
</evidence>
<evidence type="ECO:0000256" key="2">
    <source>
        <dbReference type="SAM" id="MobiDB-lite"/>
    </source>
</evidence>
<evidence type="ECO:0000269" key="3">
    <source>
    </source>
</evidence>
<evidence type="ECO:0000269" key="4">
    <source>
    </source>
</evidence>
<evidence type="ECO:0000269" key="5">
    <source>
    </source>
</evidence>
<evidence type="ECO:0000269" key="6">
    <source>
    </source>
</evidence>
<evidence type="ECO:0000303" key="7">
    <source>
    </source>
</evidence>
<evidence type="ECO:0000305" key="8"/>
<evidence type="ECO:0000305" key="9">
    <source>
    </source>
</evidence>
<gene>
    <name type="ORF">FVEG_12634</name>
</gene>
<comment type="function">
    <text evidence="3 4 5 6 9">Carboxylic ester hydrolase; part of the Fusarium detoxification of benzoxazolinone cluster 2 (FDB2) involved in the degradation of benzoxazolinones produced by the host plant (PubMed:19302487, PubMed:26808652). Maize, wheat, and rye produce the 2 benzoxazinone phytoanticipins 2,4-dihy-droxy-7-methoxy-1,4-benzoxazin-3-one (DIMBOA) and 2,4-dihydroxy-1,4-benzoxazin-3-one (DIBOA) that, due to their inherent instability once released, spontaneously degrade to the more stable corresponding benzoxazolinones, 6-methoxy-2-benzoxazolinone (MBOA) and 2-benzoxazolinone (BOA), respectively (PubMed:11876429). The first step in the detoxification of benzoxazolinones involves the hydrolysis of the cyclic ester bond of benzoxazolinones by the FDB1 cluster gamma-lactamase MBL1 to aminophenols (PubMed:12788712, PubMed:26808652). MBL1 is able to convert BOA into 2-aminophenol (2-AP), as well as MBOA into 5-methoxy-2-aminophenol (2-AMP) (PubMed:12788712, PubMed:26808652). The FDB2 cluster N-malonyltransferase FDB2/NAT1 then metabolizes aminophenols via N-malonylation to non-toxic malonamic acids (PubMed:12788712, PubMed:19302487). FDB2/NAT1 converts 2-AP into N-(2-hydroxyphenyl) malonamic acid (HPMA) and 2-AMP into N-(2-hydroxy-4-methoxyphenyl) malonamic acid (HMPMA) (PubMed:12788712, PubMed:19302487). The duplicated dienlactone hydrolases DLH1 and DLH2 may provide redundant function for hydrolyzing the lactone moiety in the BOA molecule (Probable). The roles of the amidases an other enzymes encoded by the 2 FDB clusters have not been identified so far (Probable).</text>
</comment>
<comment type="catalytic activity">
    <reaction evidence="1">
        <text>a carboxylic ester + H2O = an alcohol + a carboxylate + H(+)</text>
        <dbReference type="Rhea" id="RHEA:21164"/>
        <dbReference type="ChEBI" id="CHEBI:15377"/>
        <dbReference type="ChEBI" id="CHEBI:15378"/>
        <dbReference type="ChEBI" id="CHEBI:29067"/>
        <dbReference type="ChEBI" id="CHEBI:30879"/>
        <dbReference type="ChEBI" id="CHEBI:33308"/>
        <dbReference type="EC" id="3.1.1.1"/>
    </reaction>
</comment>
<comment type="induction">
    <text evidence="6">Expression is induced in response to 2-benzoxasolinone (BOA) exposure.</text>
</comment>
<comment type="disruption phenotype">
    <text evidence="5">Does not affect tolerance to 2-benzoxazolinone (BOA).</text>
</comment>
<comment type="miscellaneous">
    <text evidence="9">Fusarium verticillioides possesses 2 unlinked loci, FDB1 and FDB2, necessary for detoxification of antimicrobial compounds produced by maize, including 2-benzoxazolinone (BOA) (Probable). The FDB2 cluster arose as a duplication of the FDB1 cluster with rearrangement and expansion by incorporating additional genes (Probable).</text>
</comment>
<comment type="similarity">
    <text evidence="8">Belongs to the type-B carboxylesterase/lipase family.</text>
</comment>